<dbReference type="EMBL" id="AF142737">
    <property type="protein sequence ID" value="AAD52908.1"/>
    <property type="molecule type" value="Genomic_DNA"/>
</dbReference>
<dbReference type="GO" id="GO:0009507">
    <property type="term" value="C:chloroplast"/>
    <property type="evidence" value="ECO:0007669"/>
    <property type="project" value="UniProtKB-SubCell"/>
</dbReference>
<dbReference type="GO" id="GO:0003723">
    <property type="term" value="F:RNA binding"/>
    <property type="evidence" value="ECO:0007669"/>
    <property type="project" value="UniProtKB-KW"/>
</dbReference>
<dbReference type="GO" id="GO:0006397">
    <property type="term" value="P:mRNA processing"/>
    <property type="evidence" value="ECO:0007669"/>
    <property type="project" value="UniProtKB-KW"/>
</dbReference>
<dbReference type="GO" id="GO:0008380">
    <property type="term" value="P:RNA splicing"/>
    <property type="evidence" value="ECO:0007669"/>
    <property type="project" value="UniProtKB-UniRule"/>
</dbReference>
<dbReference type="GO" id="GO:0008033">
    <property type="term" value="P:tRNA processing"/>
    <property type="evidence" value="ECO:0007669"/>
    <property type="project" value="UniProtKB-KW"/>
</dbReference>
<dbReference type="HAMAP" id="MF_01390">
    <property type="entry name" value="MatK"/>
    <property type="match status" value="1"/>
</dbReference>
<dbReference type="InterPro" id="IPR024937">
    <property type="entry name" value="Domain_X"/>
</dbReference>
<dbReference type="InterPro" id="IPR002866">
    <property type="entry name" value="Maturase_MatK"/>
</dbReference>
<dbReference type="InterPro" id="IPR024942">
    <property type="entry name" value="Maturase_MatK_N"/>
</dbReference>
<dbReference type="PANTHER" id="PTHR34811">
    <property type="entry name" value="MATURASE K"/>
    <property type="match status" value="1"/>
</dbReference>
<dbReference type="PANTHER" id="PTHR34811:SF1">
    <property type="entry name" value="MATURASE K"/>
    <property type="match status" value="1"/>
</dbReference>
<dbReference type="Pfam" id="PF01348">
    <property type="entry name" value="Intron_maturas2"/>
    <property type="match status" value="1"/>
</dbReference>
<dbReference type="Pfam" id="PF01824">
    <property type="entry name" value="MatK_N"/>
    <property type="match status" value="1"/>
</dbReference>
<geneLocation type="chloroplast"/>
<protein>
    <recommendedName>
        <fullName evidence="1">Maturase K</fullName>
    </recommendedName>
    <alternativeName>
        <fullName evidence="1">Intron maturase</fullName>
    </alternativeName>
</protein>
<feature type="chain" id="PRO_0000143309" description="Maturase K">
    <location>
        <begin position="1"/>
        <end position="503"/>
    </location>
</feature>
<organism>
    <name type="scientific">Caragana arborescens</name>
    <name type="common">Siberian pea tree</name>
    <name type="synonym">Robinia caragana</name>
    <dbReference type="NCBI Taxonomy" id="20484"/>
    <lineage>
        <taxon>Eukaryota</taxon>
        <taxon>Viridiplantae</taxon>
        <taxon>Streptophyta</taxon>
        <taxon>Embryophyta</taxon>
        <taxon>Tracheophyta</taxon>
        <taxon>Spermatophyta</taxon>
        <taxon>Magnoliopsida</taxon>
        <taxon>eudicotyledons</taxon>
        <taxon>Gunneridae</taxon>
        <taxon>Pentapetalae</taxon>
        <taxon>rosids</taxon>
        <taxon>fabids</taxon>
        <taxon>Fabales</taxon>
        <taxon>Fabaceae</taxon>
        <taxon>Papilionoideae</taxon>
        <taxon>50 kb inversion clade</taxon>
        <taxon>NPAAA clade</taxon>
        <taxon>Hologalegina</taxon>
        <taxon>IRL clade</taxon>
        <taxon>Caraganeae</taxon>
        <taxon>Caragana</taxon>
    </lineage>
</organism>
<sequence length="503" mass="60123">MKEYQVYLERDRSRQQDFLYPLIFREYIYGLAYSHDFNRSSFVENVGYDNKFSLLIVKRLITRMYQQNHLIISANDSNKNPFLGYNXNFYSQIISEGFAIVVEIPFFLQLSSSLEEAEIVKSYQNLRSIHSIFPFLEDKFTYLNYVSDIRIPYPIHLEILVQILRYWVKDAPFFHLLRLFLYNFCNWNSFSTPKSTFSKSNPRLFLFLYNFYVCEYESIFLFLRKKSSHLRLKSFSVFFERIFFYAKREHLVEVFAKDFSSTLTFFNDPLIHYVRYQGKSILASKNGPLVMNKWKHYCIHLWQCFFDIWSQPGTIHINQLSEHSFHLLGYFSNVRLNRSVVRSQMLQNTFLIEIVSKKLDIIVPIIPLIRSLAKAKFCNVLRDPISKPVWGDSSDFDIIERFLRICRNLSHYYNGSSKKKSLYRIKYILRLSCIKTLACKHKTTVRAFLKRSGSEELLEEFFTEEEGILSLIFPRASSTLQRLHRNRIWYLDILFSNDLVNHE</sequence>
<name>MATK_CARAB</name>
<comment type="function">
    <text evidence="1">Usually encoded in the trnK tRNA gene intron. Probably assists in splicing its own and other chloroplast group II introns.</text>
</comment>
<comment type="subcellular location">
    <subcellularLocation>
        <location>Plastid</location>
        <location>Chloroplast</location>
    </subcellularLocation>
</comment>
<comment type="similarity">
    <text evidence="1">Belongs to the intron maturase 2 family. MatK subfamily.</text>
</comment>
<proteinExistence type="inferred from homology"/>
<reference key="1">
    <citation type="journal article" date="2000" name="Am. J. Bot.">
        <title>Phylogenetic systematics of the tribe Millettieae (Leguminosae) based on chloroplast trnK/matK sequences and its implications for evolutionary patterns in Papilionoideae.</title>
        <authorList>
            <person name="Hu J.-M."/>
            <person name="Lavin M."/>
            <person name="Wojciechowski M.F."/>
            <person name="Sanderson M.J."/>
        </authorList>
    </citation>
    <scope>NUCLEOTIDE SEQUENCE [GENOMIC DNA]</scope>
</reference>
<keyword id="KW-0150">Chloroplast</keyword>
<keyword id="KW-0507">mRNA processing</keyword>
<keyword id="KW-0934">Plastid</keyword>
<keyword id="KW-0694">RNA-binding</keyword>
<keyword id="KW-0819">tRNA processing</keyword>
<evidence type="ECO:0000255" key="1">
    <source>
        <dbReference type="HAMAP-Rule" id="MF_01390"/>
    </source>
</evidence>
<gene>
    <name evidence="1" type="primary">matK</name>
</gene>
<accession>Q9TKP0</accession>